<keyword id="KW-0002">3D-structure</keyword>
<keyword id="KW-0067">ATP-binding</keyword>
<keyword id="KW-0963">Cytoplasm</keyword>
<keyword id="KW-0227">DNA damage</keyword>
<keyword id="KW-0234">DNA repair</keyword>
<keyword id="KW-0235">DNA replication</keyword>
<keyword id="KW-0238">DNA-binding</keyword>
<keyword id="KW-0547">Nucleotide-binding</keyword>
<keyword id="KW-1185">Reference proteome</keyword>
<keyword id="KW-0742">SOS response</keyword>
<dbReference type="EMBL" id="AE000513">
    <property type="protein sequence ID" value="AAF10663.1"/>
    <property type="molecule type" value="Genomic_DNA"/>
</dbReference>
<dbReference type="PIR" id="A75438">
    <property type="entry name" value="A75438"/>
</dbReference>
<dbReference type="RefSeq" id="NP_294813.1">
    <property type="nucleotide sequence ID" value="NC_001263.1"/>
</dbReference>
<dbReference type="RefSeq" id="WP_010887732.1">
    <property type="nucleotide sequence ID" value="NC_001263.1"/>
</dbReference>
<dbReference type="PDB" id="2O5V">
    <property type="method" value="X-ray"/>
    <property type="resolution" value="1.61 A"/>
    <property type="chains" value="A=1-359"/>
</dbReference>
<dbReference type="PDBsum" id="2O5V"/>
<dbReference type="SMR" id="Q9RVE0"/>
<dbReference type="FunCoup" id="Q9RVE0">
    <property type="interactions" value="209"/>
</dbReference>
<dbReference type="STRING" id="243230.DR_1089"/>
<dbReference type="PaxDb" id="243230-DR_1089"/>
<dbReference type="EnsemblBacteria" id="AAF10663">
    <property type="protein sequence ID" value="AAF10663"/>
    <property type="gene ID" value="DR_1089"/>
</dbReference>
<dbReference type="GeneID" id="69517335"/>
<dbReference type="KEGG" id="dra:DR_1089"/>
<dbReference type="PATRIC" id="fig|243230.17.peg.1285"/>
<dbReference type="eggNOG" id="COG1195">
    <property type="taxonomic scope" value="Bacteria"/>
</dbReference>
<dbReference type="HOGENOM" id="CLU_040267_0_1_0"/>
<dbReference type="InParanoid" id="Q9RVE0"/>
<dbReference type="OrthoDB" id="9803889at2"/>
<dbReference type="EvolutionaryTrace" id="Q9RVE0"/>
<dbReference type="Proteomes" id="UP000002524">
    <property type="component" value="Chromosome 1"/>
</dbReference>
<dbReference type="GO" id="GO:0005737">
    <property type="term" value="C:cytoplasm"/>
    <property type="evidence" value="ECO:0007669"/>
    <property type="project" value="UniProtKB-SubCell"/>
</dbReference>
<dbReference type="GO" id="GO:0005524">
    <property type="term" value="F:ATP binding"/>
    <property type="evidence" value="ECO:0007669"/>
    <property type="project" value="UniProtKB-UniRule"/>
</dbReference>
<dbReference type="GO" id="GO:0003697">
    <property type="term" value="F:single-stranded DNA binding"/>
    <property type="evidence" value="ECO:0007669"/>
    <property type="project" value="UniProtKB-UniRule"/>
</dbReference>
<dbReference type="GO" id="GO:0006260">
    <property type="term" value="P:DNA replication"/>
    <property type="evidence" value="ECO:0007669"/>
    <property type="project" value="UniProtKB-UniRule"/>
</dbReference>
<dbReference type="GO" id="GO:0000731">
    <property type="term" value="P:DNA synthesis involved in DNA repair"/>
    <property type="evidence" value="ECO:0000318"/>
    <property type="project" value="GO_Central"/>
</dbReference>
<dbReference type="GO" id="GO:0006302">
    <property type="term" value="P:double-strand break repair"/>
    <property type="evidence" value="ECO:0000315"/>
    <property type="project" value="CACAO"/>
</dbReference>
<dbReference type="GO" id="GO:0009432">
    <property type="term" value="P:SOS response"/>
    <property type="evidence" value="ECO:0007669"/>
    <property type="project" value="UniProtKB-UniRule"/>
</dbReference>
<dbReference type="CDD" id="cd03242">
    <property type="entry name" value="ABC_RecF"/>
    <property type="match status" value="1"/>
</dbReference>
<dbReference type="FunFam" id="1.20.1050.90:FF:000014">
    <property type="entry name" value="DNA replication and repair protein RecF"/>
    <property type="match status" value="1"/>
</dbReference>
<dbReference type="Gene3D" id="3.40.50.300">
    <property type="entry name" value="P-loop containing nucleotide triphosphate hydrolases"/>
    <property type="match status" value="1"/>
</dbReference>
<dbReference type="Gene3D" id="1.20.1050.90">
    <property type="entry name" value="RecF/RecN/SMC, N-terminal domain"/>
    <property type="match status" value="1"/>
</dbReference>
<dbReference type="HAMAP" id="MF_00365">
    <property type="entry name" value="RecF"/>
    <property type="match status" value="1"/>
</dbReference>
<dbReference type="InterPro" id="IPR001238">
    <property type="entry name" value="DNA-binding_RecF"/>
</dbReference>
<dbReference type="InterPro" id="IPR018078">
    <property type="entry name" value="DNA-binding_RecF_CS"/>
</dbReference>
<dbReference type="InterPro" id="IPR027417">
    <property type="entry name" value="P-loop_NTPase"/>
</dbReference>
<dbReference type="InterPro" id="IPR003395">
    <property type="entry name" value="RecF/RecN/SMC_N"/>
</dbReference>
<dbReference type="InterPro" id="IPR042174">
    <property type="entry name" value="RecF_2"/>
</dbReference>
<dbReference type="NCBIfam" id="NF010680">
    <property type="entry name" value="PRK14079.1"/>
    <property type="match status" value="1"/>
</dbReference>
<dbReference type="NCBIfam" id="TIGR00611">
    <property type="entry name" value="recf"/>
    <property type="match status" value="1"/>
</dbReference>
<dbReference type="PANTHER" id="PTHR32182">
    <property type="entry name" value="DNA REPLICATION AND REPAIR PROTEIN RECF"/>
    <property type="match status" value="1"/>
</dbReference>
<dbReference type="PANTHER" id="PTHR32182:SF0">
    <property type="entry name" value="DNA REPLICATION AND REPAIR PROTEIN RECF"/>
    <property type="match status" value="1"/>
</dbReference>
<dbReference type="Pfam" id="PF02463">
    <property type="entry name" value="SMC_N"/>
    <property type="match status" value="1"/>
</dbReference>
<dbReference type="SUPFAM" id="SSF52540">
    <property type="entry name" value="P-loop containing nucleoside triphosphate hydrolases"/>
    <property type="match status" value="1"/>
</dbReference>
<dbReference type="PROSITE" id="PS00617">
    <property type="entry name" value="RECF_1"/>
    <property type="match status" value="1"/>
</dbReference>
<dbReference type="PROSITE" id="PS00618">
    <property type="entry name" value="RECF_2"/>
    <property type="match status" value="1"/>
</dbReference>
<evidence type="ECO:0000250" key="1"/>
<evidence type="ECO:0000255" key="2"/>
<evidence type="ECO:0000305" key="3"/>
<evidence type="ECO:0007829" key="4">
    <source>
        <dbReference type="PDB" id="2O5V"/>
    </source>
</evidence>
<proteinExistence type="evidence at protein level"/>
<gene>
    <name type="primary">recF</name>
    <name type="ordered locus">DR_1089</name>
</gene>
<organism>
    <name type="scientific">Deinococcus radiodurans (strain ATCC 13939 / DSM 20539 / JCM 16871 / CCUG 27074 / LMG 4051 / NBRC 15346 / NCIMB 9279 / VKM B-1422 / R1)</name>
    <dbReference type="NCBI Taxonomy" id="243230"/>
    <lineage>
        <taxon>Bacteria</taxon>
        <taxon>Thermotogati</taxon>
        <taxon>Deinococcota</taxon>
        <taxon>Deinococci</taxon>
        <taxon>Deinococcales</taxon>
        <taxon>Deinococcaceae</taxon>
        <taxon>Deinococcus</taxon>
    </lineage>
</organism>
<sequence>MGDVRLSALSTLNYRNLAPGTLNFPEGVTGIYGENGAGKTNLLEAAYLALTGQTDAPRIEQLIQAGETEAYVRADLQQGGSLSIQEVGLGRGRRQLKVDGVRARTGDLPRGGAVWIRPEDSELVFGPPSGRRAYLDSLLSRLSARYGEQLSRYERTVSQRNAALRGGEEWAMHVWDDVLLKLGTEIMLFRRRALTRLDELAREANAQLGSRKTLALTLTESTSPETYAADLRGRRAEELARGSTVTGPHRDDLLLTLGDFPASDYASRGEGRTVALALRRAELELLREKFGEDPVLLLDDFTAELDPHRRQYLLDLAASVPQAIVTGTELAPGAALTLRAQAGRFTPVADEEMQAEGTA</sequence>
<feature type="chain" id="PRO_0000196413" description="DNA replication and repair protein RecF">
    <location>
        <begin position="1"/>
        <end position="359"/>
    </location>
</feature>
<feature type="binding site" evidence="2">
    <location>
        <begin position="33"/>
        <end position="40"/>
    </location>
    <ligand>
        <name>ATP</name>
        <dbReference type="ChEBI" id="CHEBI:30616"/>
    </ligand>
</feature>
<feature type="strand" evidence="4">
    <location>
        <begin position="6"/>
        <end position="14"/>
    </location>
</feature>
<feature type="strand" evidence="4">
    <location>
        <begin position="19"/>
        <end position="23"/>
    </location>
</feature>
<feature type="strand" evidence="4">
    <location>
        <begin position="26"/>
        <end position="32"/>
    </location>
</feature>
<feature type="helix" evidence="4">
    <location>
        <begin position="39"/>
        <end position="51"/>
    </location>
</feature>
<feature type="helix" evidence="4">
    <location>
        <begin position="59"/>
        <end position="62"/>
    </location>
</feature>
<feature type="strand" evidence="4">
    <location>
        <begin position="70"/>
        <end position="78"/>
    </location>
</feature>
<feature type="strand" evidence="4">
    <location>
        <begin position="81"/>
        <end position="90"/>
    </location>
</feature>
<feature type="strand" evidence="4">
    <location>
        <begin position="93"/>
        <end position="98"/>
    </location>
</feature>
<feature type="strand" evidence="4">
    <location>
        <begin position="101"/>
        <end position="103"/>
    </location>
</feature>
<feature type="helix" evidence="4">
    <location>
        <begin position="105"/>
        <end position="107"/>
    </location>
</feature>
<feature type="strand" evidence="4">
    <location>
        <begin position="113"/>
        <end position="116"/>
    </location>
</feature>
<feature type="turn" evidence="4">
    <location>
        <begin position="118"/>
        <end position="121"/>
    </location>
</feature>
<feature type="helix" evidence="4">
    <location>
        <begin position="122"/>
        <end position="125"/>
    </location>
</feature>
<feature type="helix" evidence="4">
    <location>
        <begin position="128"/>
        <end position="142"/>
    </location>
</feature>
<feature type="helix" evidence="4">
    <location>
        <begin position="144"/>
        <end position="165"/>
    </location>
</feature>
<feature type="helix" evidence="4">
    <location>
        <begin position="169"/>
        <end position="171"/>
    </location>
</feature>
<feature type="turn" evidence="4">
    <location>
        <begin position="172"/>
        <end position="175"/>
    </location>
</feature>
<feature type="helix" evidence="4">
    <location>
        <begin position="176"/>
        <end position="207"/>
    </location>
</feature>
<feature type="strand" evidence="4">
    <location>
        <begin position="214"/>
        <end position="219"/>
    </location>
</feature>
<feature type="turn" evidence="4">
    <location>
        <begin position="224"/>
        <end position="226"/>
    </location>
</feature>
<feature type="helix" evidence="4">
    <location>
        <begin position="227"/>
        <end position="233"/>
    </location>
</feature>
<feature type="helix" evidence="4">
    <location>
        <begin position="235"/>
        <end position="241"/>
    </location>
</feature>
<feature type="helix" evidence="4">
    <location>
        <begin position="248"/>
        <end position="250"/>
    </location>
</feature>
<feature type="strand" evidence="4">
    <location>
        <begin position="252"/>
        <end position="257"/>
    </location>
</feature>
<feature type="helix" evidence="4">
    <location>
        <begin position="262"/>
        <end position="265"/>
    </location>
</feature>
<feature type="helix" evidence="4">
    <location>
        <begin position="268"/>
        <end position="290"/>
    </location>
</feature>
<feature type="strand" evidence="4">
    <location>
        <begin position="295"/>
        <end position="298"/>
    </location>
</feature>
<feature type="helix" evidence="4">
    <location>
        <begin position="301"/>
        <end position="303"/>
    </location>
</feature>
<feature type="helix" evidence="4">
    <location>
        <begin position="307"/>
        <end position="319"/>
    </location>
</feature>
<feature type="strand" evidence="4">
    <location>
        <begin position="320"/>
        <end position="329"/>
    </location>
</feature>
<feature type="strand" evidence="4">
    <location>
        <begin position="335"/>
        <end position="341"/>
    </location>
</feature>
<feature type="strand" evidence="4">
    <location>
        <begin position="344"/>
        <end position="347"/>
    </location>
</feature>
<feature type="turn" evidence="4">
    <location>
        <begin position="351"/>
        <end position="353"/>
    </location>
</feature>
<name>RECF_DEIRA</name>
<protein>
    <recommendedName>
        <fullName>DNA replication and repair protein RecF</fullName>
    </recommendedName>
</protein>
<reference key="1">
    <citation type="journal article" date="1999" name="Science">
        <title>Genome sequence of the radioresistant bacterium Deinococcus radiodurans R1.</title>
        <authorList>
            <person name="White O."/>
            <person name="Eisen J.A."/>
            <person name="Heidelberg J.F."/>
            <person name="Hickey E.K."/>
            <person name="Peterson J.D."/>
            <person name="Dodson R.J."/>
            <person name="Haft D.H."/>
            <person name="Gwinn M.L."/>
            <person name="Nelson W.C."/>
            <person name="Richardson D.L."/>
            <person name="Moffat K.S."/>
            <person name="Qin H."/>
            <person name="Jiang L."/>
            <person name="Pamphile W."/>
            <person name="Crosby M."/>
            <person name="Shen M."/>
            <person name="Vamathevan J.J."/>
            <person name="Lam P."/>
            <person name="McDonald L.A."/>
            <person name="Utterback T.R."/>
            <person name="Zalewski C."/>
            <person name="Makarova K.S."/>
            <person name="Aravind L."/>
            <person name="Daly M.J."/>
            <person name="Minton K.W."/>
            <person name="Fleischmann R.D."/>
            <person name="Ketchum K.A."/>
            <person name="Nelson K.E."/>
            <person name="Salzberg S.L."/>
            <person name="Smith H.O."/>
            <person name="Venter J.C."/>
            <person name="Fraser C.M."/>
        </authorList>
    </citation>
    <scope>NUCLEOTIDE SEQUENCE [LARGE SCALE GENOMIC DNA]</scope>
    <source>
        <strain>ATCC 13939 / DSM 20539 / JCM 16871 / CCUG 27074 / LMG 4051 / NBRC 15346 / NCIMB 9279 / VKM B-1422 / R1</strain>
    </source>
</reference>
<comment type="function">
    <text evidence="1">The RecF protein is involved in DNA metabolism; it is required for DNA replication and normal SOS inducibility. RecF binds preferentially to single-stranded, linear DNA. It also seems to bind ATP (By similarity).</text>
</comment>
<comment type="subcellular location">
    <subcellularLocation>
        <location evidence="1">Cytoplasm</location>
    </subcellularLocation>
</comment>
<comment type="similarity">
    <text evidence="3">Belongs to the RecF family.</text>
</comment>
<accession>Q9RVE0</accession>